<dbReference type="EMBL" id="AK016779">
    <property type="protein sequence ID" value="BAB30425.1"/>
    <property type="status" value="ALT_FRAME"/>
    <property type="molecule type" value="mRNA"/>
</dbReference>
<dbReference type="EMBL" id="AK051535">
    <property type="protein sequence ID" value="BAC34666.1"/>
    <property type="molecule type" value="mRNA"/>
</dbReference>
<dbReference type="EMBL" id="BC072665">
    <property type="protein sequence ID" value="AAH72665.2"/>
    <property type="molecule type" value="mRNA"/>
</dbReference>
<dbReference type="CCDS" id="CCDS20813.1"/>
<dbReference type="RefSeq" id="NP_080322.2">
    <property type="nucleotide sequence ID" value="NM_026046.3"/>
</dbReference>
<dbReference type="SMR" id="Q6GQR8"/>
<dbReference type="FunCoup" id="Q6GQR8">
    <property type="interactions" value="3"/>
</dbReference>
<dbReference type="STRING" id="10090.ENSMUSP00000072079"/>
<dbReference type="iPTMnet" id="Q6GQR8"/>
<dbReference type="PhosphoSitePlus" id="Q6GQR8"/>
<dbReference type="jPOST" id="Q6GQR8"/>
<dbReference type="PaxDb" id="10090-ENSMUSP00000072079"/>
<dbReference type="ProteomicsDB" id="275282"/>
<dbReference type="Antibodypedia" id="19680">
    <property type="antibodies" value="212 antibodies from 24 providers"/>
</dbReference>
<dbReference type="DNASU" id="67230"/>
<dbReference type="Ensembl" id="ENSMUST00000072222.8">
    <property type="protein sequence ID" value="ENSMUSP00000072079.8"/>
    <property type="gene ID" value="ENSMUSG00000057894.11"/>
</dbReference>
<dbReference type="Ensembl" id="ENSMUST00000121215.2">
    <property type="protein sequence ID" value="ENSMUSP00000113355.2"/>
    <property type="gene ID" value="ENSMUSG00000057894.11"/>
</dbReference>
<dbReference type="GeneID" id="67230"/>
<dbReference type="KEGG" id="mmu:67230"/>
<dbReference type="UCSC" id="uc009feh.2">
    <property type="organism name" value="mouse"/>
</dbReference>
<dbReference type="AGR" id="MGI:1921283"/>
<dbReference type="CTD" id="67230"/>
<dbReference type="MGI" id="MGI:1921283">
    <property type="gene designation" value="Zfp329"/>
</dbReference>
<dbReference type="VEuPathDB" id="HostDB:ENSMUSG00000057894"/>
<dbReference type="eggNOG" id="KOG1721">
    <property type="taxonomic scope" value="Eukaryota"/>
</dbReference>
<dbReference type="GeneTree" id="ENSGT00940000162872"/>
<dbReference type="HOGENOM" id="CLU_002678_44_11_1"/>
<dbReference type="InParanoid" id="Q6GQR8"/>
<dbReference type="OMA" id="GEQKIMK"/>
<dbReference type="OrthoDB" id="6591996at2759"/>
<dbReference type="PhylomeDB" id="Q6GQR8"/>
<dbReference type="TreeFam" id="TF337055"/>
<dbReference type="BioGRID-ORCS" id="67230">
    <property type="hits" value="2 hits in 76 CRISPR screens"/>
</dbReference>
<dbReference type="ChiTaRS" id="Zfp329">
    <property type="organism name" value="mouse"/>
</dbReference>
<dbReference type="PRO" id="PR:Q6GQR8"/>
<dbReference type="Proteomes" id="UP000000589">
    <property type="component" value="Chromosome 7"/>
</dbReference>
<dbReference type="RNAct" id="Q6GQR8">
    <property type="molecule type" value="protein"/>
</dbReference>
<dbReference type="Bgee" id="ENSMUSG00000057894">
    <property type="expression patterns" value="Expressed in saccule of membranous labyrinth and 242 other cell types or tissues"/>
</dbReference>
<dbReference type="ExpressionAtlas" id="Q6GQR8">
    <property type="expression patterns" value="baseline and differential"/>
</dbReference>
<dbReference type="GO" id="GO:0005634">
    <property type="term" value="C:nucleus"/>
    <property type="evidence" value="ECO:0007669"/>
    <property type="project" value="UniProtKB-SubCell"/>
</dbReference>
<dbReference type="GO" id="GO:0003677">
    <property type="term" value="F:DNA binding"/>
    <property type="evidence" value="ECO:0007669"/>
    <property type="project" value="UniProtKB-KW"/>
</dbReference>
<dbReference type="GO" id="GO:0008270">
    <property type="term" value="F:zinc ion binding"/>
    <property type="evidence" value="ECO:0007669"/>
    <property type="project" value="UniProtKB-KW"/>
</dbReference>
<dbReference type="FunFam" id="3.30.160.60:FF:004541">
    <property type="match status" value="1"/>
</dbReference>
<dbReference type="FunFam" id="3.30.160.60:FF:004935">
    <property type="match status" value="1"/>
</dbReference>
<dbReference type="FunFam" id="3.30.160.60:FF:000100">
    <property type="entry name" value="Zinc finger 45-like"/>
    <property type="match status" value="1"/>
</dbReference>
<dbReference type="FunFam" id="3.30.160.60:FF:001307">
    <property type="entry name" value="zinc finger protein 140 isoform X3"/>
    <property type="match status" value="1"/>
</dbReference>
<dbReference type="FunFam" id="3.30.160.60:FF:000295">
    <property type="entry name" value="zinc finger protein 19"/>
    <property type="match status" value="1"/>
</dbReference>
<dbReference type="FunFam" id="3.30.160.60:FF:002259">
    <property type="entry name" value="zinc finger protein 271"/>
    <property type="match status" value="1"/>
</dbReference>
<dbReference type="FunFam" id="3.30.160.60:FF:000224">
    <property type="entry name" value="Zinc finger protein 329"/>
    <property type="match status" value="1"/>
</dbReference>
<dbReference type="FunFam" id="3.30.160.60:FF:001078">
    <property type="entry name" value="Zinc finger protein 329"/>
    <property type="match status" value="1"/>
</dbReference>
<dbReference type="FunFam" id="3.30.160.60:FF:001585">
    <property type="entry name" value="Zinc finger protein 329"/>
    <property type="match status" value="1"/>
</dbReference>
<dbReference type="FunFam" id="3.30.160.60:FF:001675">
    <property type="entry name" value="Zinc finger protein 329"/>
    <property type="match status" value="1"/>
</dbReference>
<dbReference type="FunFam" id="3.30.160.60:FF:002402">
    <property type="entry name" value="Zinc finger protein 347"/>
    <property type="match status" value="1"/>
</dbReference>
<dbReference type="FunFam" id="3.30.160.60:FF:001270">
    <property type="entry name" value="zinc finger protein 583 isoform X1"/>
    <property type="match status" value="1"/>
</dbReference>
<dbReference type="FunFam" id="3.30.160.60:FF:000953">
    <property type="entry name" value="Zinc finger protein 691"/>
    <property type="match status" value="1"/>
</dbReference>
<dbReference type="Gene3D" id="3.30.160.60">
    <property type="entry name" value="Classic Zinc Finger"/>
    <property type="match status" value="12"/>
</dbReference>
<dbReference type="InterPro" id="IPR036236">
    <property type="entry name" value="Znf_C2H2_sf"/>
</dbReference>
<dbReference type="InterPro" id="IPR013087">
    <property type="entry name" value="Znf_C2H2_type"/>
</dbReference>
<dbReference type="PANTHER" id="PTHR23235:SF178">
    <property type="entry name" value="C2H2-TYPE DOMAIN-CONTAINING PROTEIN-RELATED"/>
    <property type="match status" value="1"/>
</dbReference>
<dbReference type="PANTHER" id="PTHR23235">
    <property type="entry name" value="KRUEPPEL-LIKE TRANSCRIPTION FACTOR"/>
    <property type="match status" value="1"/>
</dbReference>
<dbReference type="Pfam" id="PF00096">
    <property type="entry name" value="zf-C2H2"/>
    <property type="match status" value="11"/>
</dbReference>
<dbReference type="SMART" id="SM00355">
    <property type="entry name" value="ZnF_C2H2"/>
    <property type="match status" value="12"/>
</dbReference>
<dbReference type="SUPFAM" id="SSF57667">
    <property type="entry name" value="beta-beta-alpha zinc fingers"/>
    <property type="match status" value="7"/>
</dbReference>
<dbReference type="PROSITE" id="PS00028">
    <property type="entry name" value="ZINC_FINGER_C2H2_1"/>
    <property type="match status" value="12"/>
</dbReference>
<dbReference type="PROSITE" id="PS50157">
    <property type="entry name" value="ZINC_FINGER_C2H2_2"/>
    <property type="match status" value="12"/>
</dbReference>
<accession>Q6GQR8</accession>
<accession>Q8BKL5</accession>
<accession>Q9D459</accession>
<gene>
    <name type="primary">Znf329</name>
    <name type="synonym">Zfp329</name>
</gene>
<keyword id="KW-0238">DNA-binding</keyword>
<keyword id="KW-0479">Metal-binding</keyword>
<keyword id="KW-0539">Nucleus</keyword>
<keyword id="KW-0597">Phosphoprotein</keyword>
<keyword id="KW-1185">Reference proteome</keyword>
<keyword id="KW-0677">Repeat</keyword>
<keyword id="KW-0804">Transcription</keyword>
<keyword id="KW-0805">Transcription regulation</keyword>
<keyword id="KW-0862">Zinc</keyword>
<keyword id="KW-0863">Zinc-finger</keyword>
<proteinExistence type="evidence at protein level"/>
<sequence length="522" mass="59832">MEGFTREAPCFPILGDNWDCENQERNLRQSPLIDEKTEAQEANCGHVNLGEHLSTNPALLPSQRVPGTNGFHVFNSDIKTFDCDQTLHSCPPSYAVKGTADGDACEKATQPSMEATQLVRNQMREKSYKYTESVKSLNHFTTALCDKKIKKRSKRFYKGKDFGDILALSSSLNEKRSHSAEKPYKCAECGKCFKRNSSLVLHHRTHTGEKPYTCNDCGKSFSKNYNLIVHRRIHTGEKPYKCSKCGKAFSDGSALTQHQRIHTGEKPYACLDCGKTFNRNSSLILHQRTHTGEKPYRCNECGKPFTDISHLTVHLRIHTGEKPYECSRCGKAFRDGSYLTQHERTHTGEKPFECVECGKSFSRNSHLIVHQKIHSGEKPYECKECGKTFIESAYLIRHQRVHTGEKPYGCNQCRKLFRNIAGLIRHQRIHTGERPYECNQCGKAFRDSSCLTKHQRIHTKETPYQCLKCGKSFRQNTHLVVHQRLHNREGPSQCPHCGKIFRRSWCLARHQRTHLEEQPTET</sequence>
<protein>
    <recommendedName>
        <fullName>Zinc finger protein 329</fullName>
    </recommendedName>
</protein>
<organism>
    <name type="scientific">Mus musculus</name>
    <name type="common">Mouse</name>
    <dbReference type="NCBI Taxonomy" id="10090"/>
    <lineage>
        <taxon>Eukaryota</taxon>
        <taxon>Metazoa</taxon>
        <taxon>Chordata</taxon>
        <taxon>Craniata</taxon>
        <taxon>Vertebrata</taxon>
        <taxon>Euteleostomi</taxon>
        <taxon>Mammalia</taxon>
        <taxon>Eutheria</taxon>
        <taxon>Euarchontoglires</taxon>
        <taxon>Glires</taxon>
        <taxon>Rodentia</taxon>
        <taxon>Myomorpha</taxon>
        <taxon>Muroidea</taxon>
        <taxon>Muridae</taxon>
        <taxon>Murinae</taxon>
        <taxon>Mus</taxon>
        <taxon>Mus</taxon>
    </lineage>
</organism>
<name>ZN329_MOUSE</name>
<feature type="chain" id="PRO_0000307289" description="Zinc finger protein 329">
    <location>
        <begin position="1"/>
        <end position="522"/>
    </location>
</feature>
<feature type="zinc finger region" description="C2H2-type 1" evidence="1">
    <location>
        <begin position="184"/>
        <end position="206"/>
    </location>
</feature>
<feature type="zinc finger region" description="C2H2-type 2" evidence="1">
    <location>
        <begin position="212"/>
        <end position="234"/>
    </location>
</feature>
<feature type="zinc finger region" description="C2H2-type 3" evidence="1">
    <location>
        <begin position="240"/>
        <end position="262"/>
    </location>
</feature>
<feature type="zinc finger region" description="C2H2-type 4" evidence="1">
    <location>
        <begin position="268"/>
        <end position="290"/>
    </location>
</feature>
<feature type="zinc finger region" description="C2H2-type 5" evidence="1">
    <location>
        <begin position="296"/>
        <end position="318"/>
    </location>
</feature>
<feature type="zinc finger region" description="C2H2-type 6" evidence="1">
    <location>
        <begin position="324"/>
        <end position="346"/>
    </location>
</feature>
<feature type="zinc finger region" description="C2H2-type 7" evidence="1">
    <location>
        <begin position="352"/>
        <end position="374"/>
    </location>
</feature>
<feature type="zinc finger region" description="C2H2-type 8" evidence="1">
    <location>
        <begin position="380"/>
        <end position="402"/>
    </location>
</feature>
<feature type="zinc finger region" description="C2H2-type 9" evidence="1">
    <location>
        <begin position="408"/>
        <end position="430"/>
    </location>
</feature>
<feature type="zinc finger region" description="C2H2-type 10" evidence="1">
    <location>
        <begin position="436"/>
        <end position="458"/>
    </location>
</feature>
<feature type="zinc finger region" description="C2H2-type 11" evidence="1">
    <location>
        <begin position="464"/>
        <end position="486"/>
    </location>
</feature>
<feature type="zinc finger region" description="C2H2-type 12" evidence="1">
    <location>
        <begin position="492"/>
        <end position="514"/>
    </location>
</feature>
<feature type="modified residue" description="Phosphoserine" evidence="3">
    <location>
        <position position="30"/>
    </location>
</feature>
<feature type="sequence conflict" description="In Ref. 1; BAC34666." evidence="2" ref="1">
    <original>E</original>
    <variation>G</variation>
    <location>
        <position position="181"/>
    </location>
</feature>
<reference key="1">
    <citation type="journal article" date="2005" name="Science">
        <title>The transcriptional landscape of the mammalian genome.</title>
        <authorList>
            <person name="Carninci P."/>
            <person name="Kasukawa T."/>
            <person name="Katayama S."/>
            <person name="Gough J."/>
            <person name="Frith M.C."/>
            <person name="Maeda N."/>
            <person name="Oyama R."/>
            <person name="Ravasi T."/>
            <person name="Lenhard B."/>
            <person name="Wells C."/>
            <person name="Kodzius R."/>
            <person name="Shimokawa K."/>
            <person name="Bajic V.B."/>
            <person name="Brenner S.E."/>
            <person name="Batalov S."/>
            <person name="Forrest A.R."/>
            <person name="Zavolan M."/>
            <person name="Davis M.J."/>
            <person name="Wilming L.G."/>
            <person name="Aidinis V."/>
            <person name="Allen J.E."/>
            <person name="Ambesi-Impiombato A."/>
            <person name="Apweiler R."/>
            <person name="Aturaliya R.N."/>
            <person name="Bailey T.L."/>
            <person name="Bansal M."/>
            <person name="Baxter L."/>
            <person name="Beisel K.W."/>
            <person name="Bersano T."/>
            <person name="Bono H."/>
            <person name="Chalk A.M."/>
            <person name="Chiu K.P."/>
            <person name="Choudhary V."/>
            <person name="Christoffels A."/>
            <person name="Clutterbuck D.R."/>
            <person name="Crowe M.L."/>
            <person name="Dalla E."/>
            <person name="Dalrymple B.P."/>
            <person name="de Bono B."/>
            <person name="Della Gatta G."/>
            <person name="di Bernardo D."/>
            <person name="Down T."/>
            <person name="Engstrom P."/>
            <person name="Fagiolini M."/>
            <person name="Faulkner G."/>
            <person name="Fletcher C.F."/>
            <person name="Fukushima T."/>
            <person name="Furuno M."/>
            <person name="Futaki S."/>
            <person name="Gariboldi M."/>
            <person name="Georgii-Hemming P."/>
            <person name="Gingeras T.R."/>
            <person name="Gojobori T."/>
            <person name="Green R.E."/>
            <person name="Gustincich S."/>
            <person name="Harbers M."/>
            <person name="Hayashi Y."/>
            <person name="Hensch T.K."/>
            <person name="Hirokawa N."/>
            <person name="Hill D."/>
            <person name="Huminiecki L."/>
            <person name="Iacono M."/>
            <person name="Ikeo K."/>
            <person name="Iwama A."/>
            <person name="Ishikawa T."/>
            <person name="Jakt M."/>
            <person name="Kanapin A."/>
            <person name="Katoh M."/>
            <person name="Kawasawa Y."/>
            <person name="Kelso J."/>
            <person name="Kitamura H."/>
            <person name="Kitano H."/>
            <person name="Kollias G."/>
            <person name="Krishnan S.P."/>
            <person name="Kruger A."/>
            <person name="Kummerfeld S.K."/>
            <person name="Kurochkin I.V."/>
            <person name="Lareau L.F."/>
            <person name="Lazarevic D."/>
            <person name="Lipovich L."/>
            <person name="Liu J."/>
            <person name="Liuni S."/>
            <person name="McWilliam S."/>
            <person name="Madan Babu M."/>
            <person name="Madera M."/>
            <person name="Marchionni L."/>
            <person name="Matsuda H."/>
            <person name="Matsuzawa S."/>
            <person name="Miki H."/>
            <person name="Mignone F."/>
            <person name="Miyake S."/>
            <person name="Morris K."/>
            <person name="Mottagui-Tabar S."/>
            <person name="Mulder N."/>
            <person name="Nakano N."/>
            <person name="Nakauchi H."/>
            <person name="Ng P."/>
            <person name="Nilsson R."/>
            <person name="Nishiguchi S."/>
            <person name="Nishikawa S."/>
            <person name="Nori F."/>
            <person name="Ohara O."/>
            <person name="Okazaki Y."/>
            <person name="Orlando V."/>
            <person name="Pang K.C."/>
            <person name="Pavan W.J."/>
            <person name="Pavesi G."/>
            <person name="Pesole G."/>
            <person name="Petrovsky N."/>
            <person name="Piazza S."/>
            <person name="Reed J."/>
            <person name="Reid J.F."/>
            <person name="Ring B.Z."/>
            <person name="Ringwald M."/>
            <person name="Rost B."/>
            <person name="Ruan Y."/>
            <person name="Salzberg S.L."/>
            <person name="Sandelin A."/>
            <person name="Schneider C."/>
            <person name="Schoenbach C."/>
            <person name="Sekiguchi K."/>
            <person name="Semple C.A."/>
            <person name="Seno S."/>
            <person name="Sessa L."/>
            <person name="Sheng Y."/>
            <person name="Shibata Y."/>
            <person name="Shimada H."/>
            <person name="Shimada K."/>
            <person name="Silva D."/>
            <person name="Sinclair B."/>
            <person name="Sperling S."/>
            <person name="Stupka E."/>
            <person name="Sugiura K."/>
            <person name="Sultana R."/>
            <person name="Takenaka Y."/>
            <person name="Taki K."/>
            <person name="Tammoja K."/>
            <person name="Tan S.L."/>
            <person name="Tang S."/>
            <person name="Taylor M.S."/>
            <person name="Tegner J."/>
            <person name="Teichmann S.A."/>
            <person name="Ueda H.R."/>
            <person name="van Nimwegen E."/>
            <person name="Verardo R."/>
            <person name="Wei C.L."/>
            <person name="Yagi K."/>
            <person name="Yamanishi H."/>
            <person name="Zabarovsky E."/>
            <person name="Zhu S."/>
            <person name="Zimmer A."/>
            <person name="Hide W."/>
            <person name="Bult C."/>
            <person name="Grimmond S.M."/>
            <person name="Teasdale R.D."/>
            <person name="Liu E.T."/>
            <person name="Brusic V."/>
            <person name="Quackenbush J."/>
            <person name="Wahlestedt C."/>
            <person name="Mattick J.S."/>
            <person name="Hume D.A."/>
            <person name="Kai C."/>
            <person name="Sasaki D."/>
            <person name="Tomaru Y."/>
            <person name="Fukuda S."/>
            <person name="Kanamori-Katayama M."/>
            <person name="Suzuki M."/>
            <person name="Aoki J."/>
            <person name="Arakawa T."/>
            <person name="Iida J."/>
            <person name="Imamura K."/>
            <person name="Itoh M."/>
            <person name="Kato T."/>
            <person name="Kawaji H."/>
            <person name="Kawagashira N."/>
            <person name="Kawashima T."/>
            <person name="Kojima M."/>
            <person name="Kondo S."/>
            <person name="Konno H."/>
            <person name="Nakano K."/>
            <person name="Ninomiya N."/>
            <person name="Nishio T."/>
            <person name="Okada M."/>
            <person name="Plessy C."/>
            <person name="Shibata K."/>
            <person name="Shiraki T."/>
            <person name="Suzuki S."/>
            <person name="Tagami M."/>
            <person name="Waki K."/>
            <person name="Watahiki A."/>
            <person name="Okamura-Oho Y."/>
            <person name="Suzuki H."/>
            <person name="Kawai J."/>
            <person name="Hayashizaki Y."/>
        </authorList>
    </citation>
    <scope>NUCLEOTIDE SEQUENCE [LARGE SCALE MRNA]</scope>
    <source>
        <strain>C57BL/6J</strain>
        <tissue>Spinal ganglion</tissue>
        <tissue>Testis</tissue>
    </source>
</reference>
<reference key="2">
    <citation type="journal article" date="2004" name="Genome Res.">
        <title>The status, quality, and expansion of the NIH full-length cDNA project: the Mammalian Gene Collection (MGC).</title>
        <authorList>
            <consortium name="The MGC Project Team"/>
        </authorList>
    </citation>
    <scope>NUCLEOTIDE SEQUENCE [LARGE SCALE MRNA]</scope>
    <source>
        <strain>C57BL/6J</strain>
        <tissue>Brain</tissue>
    </source>
</reference>
<reference key="3">
    <citation type="journal article" date="2010" name="Cell">
        <title>A tissue-specific atlas of mouse protein phosphorylation and expression.</title>
        <authorList>
            <person name="Huttlin E.L."/>
            <person name="Jedrychowski M.P."/>
            <person name="Elias J.E."/>
            <person name="Goswami T."/>
            <person name="Rad R."/>
            <person name="Beausoleil S.A."/>
            <person name="Villen J."/>
            <person name="Haas W."/>
            <person name="Sowa M.E."/>
            <person name="Gygi S.P."/>
        </authorList>
    </citation>
    <scope>PHOSPHORYLATION [LARGE SCALE ANALYSIS] AT SER-30</scope>
    <scope>IDENTIFICATION BY MASS SPECTROMETRY [LARGE SCALE ANALYSIS]</scope>
    <source>
        <tissue>Brain</tissue>
        <tissue>Lung</tissue>
    </source>
</reference>
<evidence type="ECO:0000255" key="1">
    <source>
        <dbReference type="PROSITE-ProRule" id="PRU00042"/>
    </source>
</evidence>
<evidence type="ECO:0000305" key="2"/>
<evidence type="ECO:0007744" key="3">
    <source>
    </source>
</evidence>
<comment type="function">
    <text>May be involved in transcriptional regulation.</text>
</comment>
<comment type="subcellular location">
    <subcellularLocation>
        <location evidence="2">Nucleus</location>
    </subcellularLocation>
</comment>
<comment type="similarity">
    <text evidence="2">Belongs to the krueppel C2H2-type zinc-finger protein family.</text>
</comment>
<comment type="sequence caution" evidence="2">
    <conflict type="frameshift">
        <sequence resource="EMBL-CDS" id="BAB30425"/>
    </conflict>
</comment>